<accession>B0KCN4</accession>
<gene>
    <name evidence="1" type="primary">rplM</name>
    <name type="ordered locus">Teth39_0408</name>
</gene>
<dbReference type="EMBL" id="CP000924">
    <property type="protein sequence ID" value="ABY94077.1"/>
    <property type="molecule type" value="Genomic_DNA"/>
</dbReference>
<dbReference type="RefSeq" id="WP_003868593.1">
    <property type="nucleotide sequence ID" value="NC_010321.1"/>
</dbReference>
<dbReference type="SMR" id="B0KCN4"/>
<dbReference type="STRING" id="340099.Teth39_0408"/>
<dbReference type="KEGG" id="tpd:Teth39_0408"/>
<dbReference type="eggNOG" id="COG0102">
    <property type="taxonomic scope" value="Bacteria"/>
</dbReference>
<dbReference type="HOGENOM" id="CLU_082184_2_2_9"/>
<dbReference type="Proteomes" id="UP000002156">
    <property type="component" value="Chromosome"/>
</dbReference>
<dbReference type="GO" id="GO:0022625">
    <property type="term" value="C:cytosolic large ribosomal subunit"/>
    <property type="evidence" value="ECO:0007669"/>
    <property type="project" value="TreeGrafter"/>
</dbReference>
<dbReference type="GO" id="GO:0003729">
    <property type="term" value="F:mRNA binding"/>
    <property type="evidence" value="ECO:0007669"/>
    <property type="project" value="TreeGrafter"/>
</dbReference>
<dbReference type="GO" id="GO:0003735">
    <property type="term" value="F:structural constituent of ribosome"/>
    <property type="evidence" value="ECO:0007669"/>
    <property type="project" value="InterPro"/>
</dbReference>
<dbReference type="GO" id="GO:0017148">
    <property type="term" value="P:negative regulation of translation"/>
    <property type="evidence" value="ECO:0007669"/>
    <property type="project" value="TreeGrafter"/>
</dbReference>
<dbReference type="GO" id="GO:0006412">
    <property type="term" value="P:translation"/>
    <property type="evidence" value="ECO:0007669"/>
    <property type="project" value="UniProtKB-UniRule"/>
</dbReference>
<dbReference type="CDD" id="cd00392">
    <property type="entry name" value="Ribosomal_L13"/>
    <property type="match status" value="1"/>
</dbReference>
<dbReference type="FunFam" id="3.90.1180.10:FF:000001">
    <property type="entry name" value="50S ribosomal protein L13"/>
    <property type="match status" value="1"/>
</dbReference>
<dbReference type="Gene3D" id="3.90.1180.10">
    <property type="entry name" value="Ribosomal protein L13"/>
    <property type="match status" value="1"/>
</dbReference>
<dbReference type="HAMAP" id="MF_01366">
    <property type="entry name" value="Ribosomal_uL13"/>
    <property type="match status" value="1"/>
</dbReference>
<dbReference type="InterPro" id="IPR005822">
    <property type="entry name" value="Ribosomal_uL13"/>
</dbReference>
<dbReference type="InterPro" id="IPR005823">
    <property type="entry name" value="Ribosomal_uL13_bac-type"/>
</dbReference>
<dbReference type="InterPro" id="IPR023563">
    <property type="entry name" value="Ribosomal_uL13_CS"/>
</dbReference>
<dbReference type="InterPro" id="IPR036899">
    <property type="entry name" value="Ribosomal_uL13_sf"/>
</dbReference>
<dbReference type="NCBIfam" id="TIGR01066">
    <property type="entry name" value="rplM_bact"/>
    <property type="match status" value="1"/>
</dbReference>
<dbReference type="PANTHER" id="PTHR11545:SF2">
    <property type="entry name" value="LARGE RIBOSOMAL SUBUNIT PROTEIN UL13M"/>
    <property type="match status" value="1"/>
</dbReference>
<dbReference type="PANTHER" id="PTHR11545">
    <property type="entry name" value="RIBOSOMAL PROTEIN L13"/>
    <property type="match status" value="1"/>
</dbReference>
<dbReference type="Pfam" id="PF00572">
    <property type="entry name" value="Ribosomal_L13"/>
    <property type="match status" value="1"/>
</dbReference>
<dbReference type="PIRSF" id="PIRSF002181">
    <property type="entry name" value="Ribosomal_L13"/>
    <property type="match status" value="1"/>
</dbReference>
<dbReference type="SUPFAM" id="SSF52161">
    <property type="entry name" value="Ribosomal protein L13"/>
    <property type="match status" value="1"/>
</dbReference>
<dbReference type="PROSITE" id="PS00783">
    <property type="entry name" value="RIBOSOMAL_L13"/>
    <property type="match status" value="1"/>
</dbReference>
<sequence length="143" mass="16668">MKSYMAKPEEVKRKWFVIDAEGKVLGRLASQIAKILMGKHKPTYTPHVDTGDFVIVLNAEKIVLTGNKLEDKYYKYYTGYPGGLKEVQYKKLMQTKPEFVIYHAVKGMLPKNRLGRRMIKRLKVYRGSEHKHQAQKPEKLDIE</sequence>
<comment type="function">
    <text evidence="1">This protein is one of the early assembly proteins of the 50S ribosomal subunit, although it is not seen to bind rRNA by itself. It is important during the early stages of 50S assembly.</text>
</comment>
<comment type="subunit">
    <text evidence="1">Part of the 50S ribosomal subunit.</text>
</comment>
<comment type="similarity">
    <text evidence="1">Belongs to the universal ribosomal protein uL13 family.</text>
</comment>
<reference key="1">
    <citation type="submission" date="2008-01" db="EMBL/GenBank/DDBJ databases">
        <title>Complete sequence of Thermoanaerobacter pseudethanolicus 39E.</title>
        <authorList>
            <person name="Copeland A."/>
            <person name="Lucas S."/>
            <person name="Lapidus A."/>
            <person name="Barry K."/>
            <person name="Glavina del Rio T."/>
            <person name="Dalin E."/>
            <person name="Tice H."/>
            <person name="Pitluck S."/>
            <person name="Bruce D."/>
            <person name="Goodwin L."/>
            <person name="Saunders E."/>
            <person name="Brettin T."/>
            <person name="Detter J.C."/>
            <person name="Han C."/>
            <person name="Schmutz J."/>
            <person name="Larimer F."/>
            <person name="Land M."/>
            <person name="Hauser L."/>
            <person name="Kyrpides N."/>
            <person name="Lykidis A."/>
            <person name="Hemme C."/>
            <person name="Fields M.W."/>
            <person name="He Z."/>
            <person name="Zhou J."/>
            <person name="Richardson P."/>
        </authorList>
    </citation>
    <scope>NUCLEOTIDE SEQUENCE [LARGE SCALE GENOMIC DNA]</scope>
    <source>
        <strain>ATCC 33223 / DSM 2355 / 39E</strain>
    </source>
</reference>
<feature type="chain" id="PRO_1000144190" description="Large ribosomal subunit protein uL13">
    <location>
        <begin position="1"/>
        <end position="143"/>
    </location>
</feature>
<evidence type="ECO:0000255" key="1">
    <source>
        <dbReference type="HAMAP-Rule" id="MF_01366"/>
    </source>
</evidence>
<evidence type="ECO:0000305" key="2"/>
<organism>
    <name type="scientific">Thermoanaerobacter pseudethanolicus (strain ATCC 33223 / 39E)</name>
    <name type="common">Clostridium thermohydrosulfuricum</name>
    <dbReference type="NCBI Taxonomy" id="340099"/>
    <lineage>
        <taxon>Bacteria</taxon>
        <taxon>Bacillati</taxon>
        <taxon>Bacillota</taxon>
        <taxon>Clostridia</taxon>
        <taxon>Thermoanaerobacterales</taxon>
        <taxon>Thermoanaerobacteraceae</taxon>
        <taxon>Thermoanaerobacter</taxon>
    </lineage>
</organism>
<protein>
    <recommendedName>
        <fullName evidence="1">Large ribosomal subunit protein uL13</fullName>
    </recommendedName>
    <alternativeName>
        <fullName evidence="2">50S ribosomal protein L13</fullName>
    </alternativeName>
</protein>
<proteinExistence type="inferred from homology"/>
<keyword id="KW-1185">Reference proteome</keyword>
<keyword id="KW-0687">Ribonucleoprotein</keyword>
<keyword id="KW-0689">Ribosomal protein</keyword>
<name>RL13_THEP3</name>